<evidence type="ECO:0000255" key="1"/>
<evidence type="ECO:0000305" key="2"/>
<name>HOFB_ECOLI</name>
<sequence>MNIPQLTALCLRYHGVLLDASEEVVHVAVVDAPSHELLDALHFATTKRIEITCWTRQQMEGHASRTQQTLPVAVQEKHQPKAELLTRTLQSALEQRASDIHIEPADNAYRIRLRIDGVLHPLPDVSPDAGVALTARLKVLGNLDIAEHRLPQDGQFTVELAGNAVSFRIATLPCRGGEKVVLRLLQQVGQALDVNTLGMQPLQLADFAHALQQPQGLVLVTGPTGSGKTVTLYSALQKLNTADINICSVEDPVEIPIAGLNQTQIHPRAGLTFQGVLRALLRQDPDVIMIGEIRDGETAEIAIKAAQTGHLVLSTLHTNSTCETLVRLQQMGVARWMLSSALTLVIAQRLVRKLCPHCRRQQGEPIHIPDNVWPSPLPHWQAPGCVHCYHGFYGRTALFEVLPITPVIRQLISANTDVESLETHARQAGMRTLFENGCLAVEQGLTTFEELIRVLGMPHGE</sequence>
<gene>
    <name type="primary">hofB</name>
    <name type="synonym">hopB</name>
    <name type="ordered locus">b0107</name>
    <name type="ordered locus">JW0103</name>
</gene>
<keyword id="KW-0067">ATP-binding</keyword>
<keyword id="KW-0547">Nucleotide-binding</keyword>
<keyword id="KW-1185">Reference proteome</keyword>
<keyword id="KW-0813">Transport</keyword>
<protein>
    <recommendedName>
        <fullName>Protein transport protein HofB homolog</fullName>
    </recommendedName>
</protein>
<comment type="similarity">
    <text evidence="2">Belongs to the GSP E family.</text>
</comment>
<dbReference type="EMBL" id="L28105">
    <property type="protein sequence ID" value="AAC36924.1"/>
    <property type="molecule type" value="Genomic_DNA"/>
</dbReference>
<dbReference type="EMBL" id="U00096">
    <property type="protein sequence ID" value="AAC73218.1"/>
    <property type="molecule type" value="Genomic_DNA"/>
</dbReference>
<dbReference type="EMBL" id="AP009048">
    <property type="protein sequence ID" value="BAB96676.2"/>
    <property type="molecule type" value="Genomic_DNA"/>
</dbReference>
<dbReference type="EMBL" id="L20834">
    <property type="status" value="NOT_ANNOTATED_CDS"/>
    <property type="molecule type" value="Genomic_DNA"/>
</dbReference>
<dbReference type="PIR" id="C64733">
    <property type="entry name" value="C64733"/>
</dbReference>
<dbReference type="RefSeq" id="NP_414649.1">
    <property type="nucleotide sequence ID" value="NC_000913.3"/>
</dbReference>
<dbReference type="SMR" id="P36645"/>
<dbReference type="BioGRID" id="4261684">
    <property type="interactions" value="13"/>
</dbReference>
<dbReference type="DIP" id="DIP-9919N"/>
<dbReference type="FunCoup" id="P36645">
    <property type="interactions" value="84"/>
</dbReference>
<dbReference type="IntAct" id="P36645">
    <property type="interactions" value="5"/>
</dbReference>
<dbReference type="STRING" id="511145.b0107"/>
<dbReference type="PaxDb" id="511145-b0107"/>
<dbReference type="EnsemblBacteria" id="AAC73218">
    <property type="protein sequence ID" value="AAC73218"/>
    <property type="gene ID" value="b0107"/>
</dbReference>
<dbReference type="GeneID" id="947481"/>
<dbReference type="KEGG" id="ecj:JW0103"/>
<dbReference type="KEGG" id="eco:b0107"/>
<dbReference type="KEGG" id="ecoc:C3026_00435"/>
<dbReference type="PATRIC" id="fig|511145.12.peg.109"/>
<dbReference type="EchoBASE" id="EB2030"/>
<dbReference type="eggNOG" id="COG2804">
    <property type="taxonomic scope" value="Bacteria"/>
</dbReference>
<dbReference type="HOGENOM" id="CLU_013446_2_2_6"/>
<dbReference type="InParanoid" id="P36645"/>
<dbReference type="OMA" id="HCFSGYY"/>
<dbReference type="OrthoDB" id="9804785at2"/>
<dbReference type="PhylomeDB" id="P36645"/>
<dbReference type="BioCyc" id="EcoCyc:EG12106-MONOMER"/>
<dbReference type="PRO" id="PR:P36645"/>
<dbReference type="Proteomes" id="UP000000625">
    <property type="component" value="Chromosome"/>
</dbReference>
<dbReference type="GO" id="GO:0005886">
    <property type="term" value="C:plasma membrane"/>
    <property type="evidence" value="ECO:0000318"/>
    <property type="project" value="GO_Central"/>
</dbReference>
<dbReference type="GO" id="GO:0005524">
    <property type="term" value="F:ATP binding"/>
    <property type="evidence" value="ECO:0007669"/>
    <property type="project" value="UniProtKB-KW"/>
</dbReference>
<dbReference type="GO" id="GO:0016887">
    <property type="term" value="F:ATP hydrolysis activity"/>
    <property type="evidence" value="ECO:0000318"/>
    <property type="project" value="GO_Central"/>
</dbReference>
<dbReference type="CDD" id="cd01129">
    <property type="entry name" value="PulE-GspE-like"/>
    <property type="match status" value="1"/>
</dbReference>
<dbReference type="Gene3D" id="3.30.450.90">
    <property type="match status" value="1"/>
</dbReference>
<dbReference type="Gene3D" id="3.40.50.300">
    <property type="entry name" value="P-loop containing nucleotide triphosphate hydrolases"/>
    <property type="match status" value="1"/>
</dbReference>
<dbReference type="InterPro" id="IPR027417">
    <property type="entry name" value="P-loop_NTPase"/>
</dbReference>
<dbReference type="InterPro" id="IPR001482">
    <property type="entry name" value="T2SS/T4SS_dom"/>
</dbReference>
<dbReference type="InterPro" id="IPR007831">
    <property type="entry name" value="T2SS_GspE_N"/>
</dbReference>
<dbReference type="NCBIfam" id="NF007755">
    <property type="entry name" value="PRK10436.1"/>
    <property type="match status" value="1"/>
</dbReference>
<dbReference type="PANTHER" id="PTHR30258:SF1">
    <property type="entry name" value="PROTEIN TRANSPORT PROTEIN HOFB HOMOLOG"/>
    <property type="match status" value="1"/>
</dbReference>
<dbReference type="PANTHER" id="PTHR30258">
    <property type="entry name" value="TYPE II SECRETION SYSTEM PROTEIN GSPE-RELATED"/>
    <property type="match status" value="1"/>
</dbReference>
<dbReference type="Pfam" id="PF05157">
    <property type="entry name" value="MshEN"/>
    <property type="match status" value="1"/>
</dbReference>
<dbReference type="Pfam" id="PF00437">
    <property type="entry name" value="T2SSE"/>
    <property type="match status" value="1"/>
</dbReference>
<dbReference type="SUPFAM" id="SSF52540">
    <property type="entry name" value="P-loop containing nucleoside triphosphate hydrolases"/>
    <property type="match status" value="1"/>
</dbReference>
<dbReference type="PROSITE" id="PS00662">
    <property type="entry name" value="T2SP_E"/>
    <property type="match status" value="1"/>
</dbReference>
<reference key="1">
    <citation type="journal article" date="1994" name="Gene">
        <title>Escherichia coli contains a set of genes homologous to those involved in protein secretion, DNA uptake and the assembly of type-4 fimbriae in other bacteria.</title>
        <authorList>
            <person name="Whitchurch C.B."/>
            <person name="Mattick J.S."/>
        </authorList>
    </citation>
    <scope>NUCLEOTIDE SEQUENCE [GENOMIC DNA]</scope>
    <source>
        <strain>K12</strain>
    </source>
</reference>
<reference key="2">
    <citation type="journal article" date="1994" name="Nucleic Acids Res.">
        <title>Systematic sequencing of the Escherichia coli genome: analysis of the 2.4-4.1 min (110,917-193,643 bp) region.</title>
        <authorList>
            <person name="Fujita N."/>
            <person name="Mori H."/>
            <person name="Yura T."/>
            <person name="Ishihama A."/>
        </authorList>
    </citation>
    <scope>NUCLEOTIDE SEQUENCE [LARGE SCALE GENOMIC DNA]</scope>
    <source>
        <strain>K12 / W3110 / ATCC 27325 / DSM 5911</strain>
    </source>
</reference>
<reference key="3">
    <citation type="journal article" date="1997" name="Science">
        <title>The complete genome sequence of Escherichia coli K-12.</title>
        <authorList>
            <person name="Blattner F.R."/>
            <person name="Plunkett G. III"/>
            <person name="Bloch C.A."/>
            <person name="Perna N.T."/>
            <person name="Burland V."/>
            <person name="Riley M."/>
            <person name="Collado-Vides J."/>
            <person name="Glasner J.D."/>
            <person name="Rode C.K."/>
            <person name="Mayhew G.F."/>
            <person name="Gregor J."/>
            <person name="Davis N.W."/>
            <person name="Kirkpatrick H.A."/>
            <person name="Goeden M.A."/>
            <person name="Rose D.J."/>
            <person name="Mau B."/>
            <person name="Shao Y."/>
        </authorList>
    </citation>
    <scope>NUCLEOTIDE SEQUENCE [LARGE SCALE GENOMIC DNA]</scope>
    <source>
        <strain>K12 / MG1655 / ATCC 47076</strain>
    </source>
</reference>
<reference key="4">
    <citation type="journal article" date="2006" name="Mol. Syst. Biol.">
        <title>Highly accurate genome sequences of Escherichia coli K-12 strains MG1655 and W3110.</title>
        <authorList>
            <person name="Hayashi K."/>
            <person name="Morooka N."/>
            <person name="Yamamoto Y."/>
            <person name="Fujita K."/>
            <person name="Isono K."/>
            <person name="Choi S."/>
            <person name="Ohtsubo E."/>
            <person name="Baba T."/>
            <person name="Wanner B.L."/>
            <person name="Mori H."/>
            <person name="Horiuchi T."/>
        </authorList>
    </citation>
    <scope>NUCLEOTIDE SEQUENCE [LARGE SCALE GENOMIC DNA]</scope>
    <scope>SEQUENCE REVISION</scope>
    <source>
        <strain>K12 / W3110 / ATCC 27325 / DSM 5911</strain>
    </source>
</reference>
<reference key="5">
    <citation type="submission" date="1993-11" db="EMBL/GenBank/DDBJ databases">
        <authorList>
            <person name="Bhatia R.S."/>
        </authorList>
    </citation>
    <scope>PRELIMINARY NUCLEOTIDE SEQUENCE [GENOMIC DNA] OF 1-283</scope>
    <source>
        <strain>K12</strain>
    </source>
</reference>
<reference key="6">
    <citation type="unpublished observations" date="1994-01">
        <authorList>
            <person name="Rudd K.R."/>
        </authorList>
    </citation>
    <scope>IDENTIFICATION</scope>
</reference>
<feature type="chain" id="PRO_0000207305" description="Protein transport protein HofB homolog">
    <location>
        <begin position="1"/>
        <end position="461"/>
    </location>
</feature>
<feature type="binding site" evidence="1">
    <location>
        <begin position="222"/>
        <end position="229"/>
    </location>
    <ligand>
        <name>ATP</name>
        <dbReference type="ChEBI" id="CHEBI:30616"/>
    </ligand>
</feature>
<feature type="sequence conflict" description="In Ref. 1; AAC36924." evidence="2" ref="1">
    <original>AL</original>
    <variation>EM</variation>
    <location>
        <begin position="8"/>
        <end position="9"/>
    </location>
</feature>
<feature type="sequence conflict" description="In Ref. 1; AAC36924." evidence="2" ref="1">
    <original>H</original>
    <variation>L</variation>
    <location>
        <position position="35"/>
    </location>
</feature>
<feature type="sequence conflict" description="In Ref. 1; AAC36924." evidence="2" ref="1">
    <original>MPHGE</original>
    <variation>DAAWQ</variation>
    <location>
        <begin position="457"/>
        <end position="461"/>
    </location>
</feature>
<proteinExistence type="inferred from homology"/>
<organism>
    <name type="scientific">Escherichia coli (strain K12)</name>
    <dbReference type="NCBI Taxonomy" id="83333"/>
    <lineage>
        <taxon>Bacteria</taxon>
        <taxon>Pseudomonadati</taxon>
        <taxon>Pseudomonadota</taxon>
        <taxon>Gammaproteobacteria</taxon>
        <taxon>Enterobacterales</taxon>
        <taxon>Enterobacteriaceae</taxon>
        <taxon>Escherichia</taxon>
    </lineage>
</organism>
<accession>P36645</accession>
<accession>P75649</accession>
<accession>Q47022</accession>